<organism>
    <name type="scientific">Thermotoga maritima (strain ATCC 43589 / DSM 3109 / JCM 10099 / NBRC 100826 / MSB8)</name>
    <dbReference type="NCBI Taxonomy" id="243274"/>
    <lineage>
        <taxon>Bacteria</taxon>
        <taxon>Thermotogati</taxon>
        <taxon>Thermotogota</taxon>
        <taxon>Thermotogae</taxon>
        <taxon>Thermotogales</taxon>
        <taxon>Thermotogaceae</taxon>
        <taxon>Thermotoga</taxon>
    </lineage>
</organism>
<reference key="1">
    <citation type="journal article" date="1994" name="J. Bacteriol.">
        <title>Phylogenetic depth of S10 and spc operons: cloning and sequencing of a ribosomal protein gene cluster from the extremely thermophilic bacterium Thermotoga maritima.</title>
        <authorList>
            <person name="Sanangelantoni A.M."/>
            <person name="Bocchetta M."/>
            <person name="Cammarano P."/>
            <person name="Tiboni O."/>
        </authorList>
    </citation>
    <scope>NUCLEOTIDE SEQUENCE [GENOMIC DNA]</scope>
    <source>
        <strain>ATCC 43589 / DSM 3109 / JCM 10099 / NBRC 100826 / MSB8</strain>
    </source>
</reference>
<reference key="2">
    <citation type="journal article" date="1999" name="Nature">
        <title>Evidence for lateral gene transfer between Archaea and Bacteria from genome sequence of Thermotoga maritima.</title>
        <authorList>
            <person name="Nelson K.E."/>
            <person name="Clayton R.A."/>
            <person name="Gill S.R."/>
            <person name="Gwinn M.L."/>
            <person name="Dodson R.J."/>
            <person name="Haft D.H."/>
            <person name="Hickey E.K."/>
            <person name="Peterson J.D."/>
            <person name="Nelson W.C."/>
            <person name="Ketchum K.A."/>
            <person name="McDonald L.A."/>
            <person name="Utterback T.R."/>
            <person name="Malek J.A."/>
            <person name="Linher K.D."/>
            <person name="Garrett M.M."/>
            <person name="Stewart A.M."/>
            <person name="Cotton M.D."/>
            <person name="Pratt M.S."/>
            <person name="Phillips C.A."/>
            <person name="Richardson D.L."/>
            <person name="Heidelberg J.F."/>
            <person name="Sutton G.G."/>
            <person name="Fleischmann R.D."/>
            <person name="Eisen J.A."/>
            <person name="White O."/>
            <person name="Salzberg S.L."/>
            <person name="Smith H.O."/>
            <person name="Venter J.C."/>
            <person name="Fraser C.M."/>
        </authorList>
    </citation>
    <scope>NUCLEOTIDE SEQUENCE [LARGE SCALE GENOMIC DNA]</scope>
    <source>
        <strain>ATCC 43589 / DSM 3109 / JCM 10099 / NBRC 100826 / MSB8</strain>
    </source>
</reference>
<accession>P46772</accession>
<comment type="function">
    <text evidence="1">Binds the lower part of the 30S subunit head. Binds mRNA in the 70S ribosome, positioning it for translation.</text>
</comment>
<comment type="subunit">
    <text evidence="1">Part of the 30S ribosomal subunit. Forms a tight complex with proteins S10 and S14.</text>
</comment>
<comment type="similarity">
    <text evidence="1">Belongs to the universal ribosomal protein uS3 family.</text>
</comment>
<name>RS3_THEMA</name>
<dbReference type="EMBL" id="Z21677">
    <property type="protein sequence ID" value="CAA79783.1"/>
    <property type="molecule type" value="Genomic_DNA"/>
</dbReference>
<dbReference type="EMBL" id="AE000512">
    <property type="protein sequence ID" value="AAD36560.1"/>
    <property type="molecule type" value="Genomic_DNA"/>
</dbReference>
<dbReference type="PIR" id="S40194">
    <property type="entry name" value="S40194"/>
</dbReference>
<dbReference type="RefSeq" id="NP_229294.1">
    <property type="nucleotide sequence ID" value="NC_000853.1"/>
</dbReference>
<dbReference type="RefSeq" id="WP_010865350.1">
    <property type="nucleotide sequence ID" value="NC_000853.1"/>
</dbReference>
<dbReference type="SMR" id="P46772"/>
<dbReference type="FunCoup" id="P46772">
    <property type="interactions" value="439"/>
</dbReference>
<dbReference type="STRING" id="243274.TM_1494"/>
<dbReference type="PaxDb" id="243274-THEMA_06830"/>
<dbReference type="EnsemblBacteria" id="AAD36560">
    <property type="protein sequence ID" value="AAD36560"/>
    <property type="gene ID" value="TM_1494"/>
</dbReference>
<dbReference type="KEGG" id="tma:TM1494"/>
<dbReference type="KEGG" id="tmi:THEMA_06830"/>
<dbReference type="KEGG" id="tmm:Tmari_1502"/>
<dbReference type="KEGG" id="tmw:THMA_1526"/>
<dbReference type="eggNOG" id="COG0092">
    <property type="taxonomic scope" value="Bacteria"/>
</dbReference>
<dbReference type="InParanoid" id="P46772"/>
<dbReference type="OrthoDB" id="9806396at2"/>
<dbReference type="Proteomes" id="UP000008183">
    <property type="component" value="Chromosome"/>
</dbReference>
<dbReference type="GO" id="GO:0022627">
    <property type="term" value="C:cytosolic small ribosomal subunit"/>
    <property type="evidence" value="ECO:0000318"/>
    <property type="project" value="GO_Central"/>
</dbReference>
<dbReference type="GO" id="GO:0003729">
    <property type="term" value="F:mRNA binding"/>
    <property type="evidence" value="ECO:0007669"/>
    <property type="project" value="UniProtKB-UniRule"/>
</dbReference>
<dbReference type="GO" id="GO:0019843">
    <property type="term" value="F:rRNA binding"/>
    <property type="evidence" value="ECO:0007669"/>
    <property type="project" value="UniProtKB-UniRule"/>
</dbReference>
<dbReference type="GO" id="GO:0003735">
    <property type="term" value="F:structural constituent of ribosome"/>
    <property type="evidence" value="ECO:0000318"/>
    <property type="project" value="GO_Central"/>
</dbReference>
<dbReference type="GO" id="GO:0006412">
    <property type="term" value="P:translation"/>
    <property type="evidence" value="ECO:0007669"/>
    <property type="project" value="UniProtKB-UniRule"/>
</dbReference>
<dbReference type="CDD" id="cd02412">
    <property type="entry name" value="KH-II_30S_S3"/>
    <property type="match status" value="1"/>
</dbReference>
<dbReference type="FunFam" id="3.30.1140.32:FF:000014">
    <property type="entry name" value="30S ribosomal protein S3"/>
    <property type="match status" value="1"/>
</dbReference>
<dbReference type="FunFam" id="3.30.300.20:FF:000001">
    <property type="entry name" value="30S ribosomal protein S3"/>
    <property type="match status" value="1"/>
</dbReference>
<dbReference type="Gene3D" id="3.30.300.20">
    <property type="match status" value="1"/>
</dbReference>
<dbReference type="Gene3D" id="3.30.1140.32">
    <property type="entry name" value="Ribosomal protein S3, C-terminal domain"/>
    <property type="match status" value="1"/>
</dbReference>
<dbReference type="HAMAP" id="MF_01309_B">
    <property type="entry name" value="Ribosomal_uS3_B"/>
    <property type="match status" value="1"/>
</dbReference>
<dbReference type="InterPro" id="IPR004087">
    <property type="entry name" value="KH_dom"/>
</dbReference>
<dbReference type="InterPro" id="IPR015946">
    <property type="entry name" value="KH_dom-like_a/b"/>
</dbReference>
<dbReference type="InterPro" id="IPR004044">
    <property type="entry name" value="KH_dom_type_2"/>
</dbReference>
<dbReference type="InterPro" id="IPR009019">
    <property type="entry name" value="KH_sf_prok-type"/>
</dbReference>
<dbReference type="InterPro" id="IPR036419">
    <property type="entry name" value="Ribosomal_S3_C_sf"/>
</dbReference>
<dbReference type="InterPro" id="IPR005704">
    <property type="entry name" value="Ribosomal_uS3_bac-typ"/>
</dbReference>
<dbReference type="InterPro" id="IPR001351">
    <property type="entry name" value="Ribosomal_uS3_C"/>
</dbReference>
<dbReference type="InterPro" id="IPR018280">
    <property type="entry name" value="Ribosomal_uS3_CS"/>
</dbReference>
<dbReference type="NCBIfam" id="TIGR01009">
    <property type="entry name" value="rpsC_bact"/>
    <property type="match status" value="1"/>
</dbReference>
<dbReference type="PANTHER" id="PTHR11760">
    <property type="entry name" value="30S/40S RIBOSOMAL PROTEIN S3"/>
    <property type="match status" value="1"/>
</dbReference>
<dbReference type="PANTHER" id="PTHR11760:SF19">
    <property type="entry name" value="SMALL RIBOSOMAL SUBUNIT PROTEIN US3C"/>
    <property type="match status" value="1"/>
</dbReference>
<dbReference type="Pfam" id="PF07650">
    <property type="entry name" value="KH_2"/>
    <property type="match status" value="1"/>
</dbReference>
<dbReference type="Pfam" id="PF00189">
    <property type="entry name" value="Ribosomal_S3_C"/>
    <property type="match status" value="1"/>
</dbReference>
<dbReference type="SMART" id="SM00322">
    <property type="entry name" value="KH"/>
    <property type="match status" value="1"/>
</dbReference>
<dbReference type="SUPFAM" id="SSF54814">
    <property type="entry name" value="Prokaryotic type KH domain (KH-domain type II)"/>
    <property type="match status" value="1"/>
</dbReference>
<dbReference type="SUPFAM" id="SSF54821">
    <property type="entry name" value="Ribosomal protein S3 C-terminal domain"/>
    <property type="match status" value="1"/>
</dbReference>
<dbReference type="PROSITE" id="PS50823">
    <property type="entry name" value="KH_TYPE_2"/>
    <property type="match status" value="1"/>
</dbReference>
<dbReference type="PROSITE" id="PS00548">
    <property type="entry name" value="RIBOSOMAL_S3"/>
    <property type="match status" value="1"/>
</dbReference>
<sequence length="209" mass="24076">MGQKVHPRGFRLGLSADWQAKWFNEKNYKEWLLEDEEIRKIIKNKYYHAGISEIYVERPDAERINITVKTARPGIIIGRKGSEITSLREELERKFNRRVVINIEEIKTPELDAQLVAESIASRIEKRASYKVAMKRAIMNAMRKGAQGIKVMVAGRLGGAEIARREWYLRGRLPLQKIKAIIDYGTATAWTKYGTIGIKVWIYKGDADI</sequence>
<protein>
    <recommendedName>
        <fullName evidence="1">Small ribosomal subunit protein uS3</fullName>
    </recommendedName>
    <alternativeName>
        <fullName evidence="2">30S ribosomal protein S3</fullName>
    </alternativeName>
</protein>
<gene>
    <name evidence="1" type="primary">rpsC</name>
    <name type="ordered locus">TM_1494</name>
</gene>
<proteinExistence type="inferred from homology"/>
<evidence type="ECO:0000255" key="1">
    <source>
        <dbReference type="HAMAP-Rule" id="MF_01309"/>
    </source>
</evidence>
<evidence type="ECO:0000305" key="2"/>
<feature type="chain" id="PRO_0000130221" description="Small ribosomal subunit protein uS3">
    <location>
        <begin position="1"/>
        <end position="209"/>
    </location>
</feature>
<feature type="domain" description="KH type-2" evidence="1">
    <location>
        <begin position="38"/>
        <end position="107"/>
    </location>
</feature>
<keyword id="KW-1185">Reference proteome</keyword>
<keyword id="KW-0687">Ribonucleoprotein</keyword>
<keyword id="KW-0689">Ribosomal protein</keyword>
<keyword id="KW-0694">RNA-binding</keyword>
<keyword id="KW-0699">rRNA-binding</keyword>